<proteinExistence type="inferred from homology"/>
<organism>
    <name type="scientific">Chlorobaculum parvum (strain DSM 263 / NCIMB 8327)</name>
    <name type="common">Chlorobium vibrioforme subsp. thiosulfatophilum</name>
    <dbReference type="NCBI Taxonomy" id="517417"/>
    <lineage>
        <taxon>Bacteria</taxon>
        <taxon>Pseudomonadati</taxon>
        <taxon>Chlorobiota</taxon>
        <taxon>Chlorobiia</taxon>
        <taxon>Chlorobiales</taxon>
        <taxon>Chlorobiaceae</taxon>
        <taxon>Chlorobaculum</taxon>
    </lineage>
</organism>
<reference key="1">
    <citation type="submission" date="2008-06" db="EMBL/GenBank/DDBJ databases">
        <title>Complete sequence of Chlorobaculum parvum NCIB 8327.</title>
        <authorList>
            <consortium name="US DOE Joint Genome Institute"/>
            <person name="Lucas S."/>
            <person name="Copeland A."/>
            <person name="Lapidus A."/>
            <person name="Glavina del Rio T."/>
            <person name="Dalin E."/>
            <person name="Tice H."/>
            <person name="Bruce D."/>
            <person name="Goodwin L."/>
            <person name="Pitluck S."/>
            <person name="Schmutz J."/>
            <person name="Larimer F."/>
            <person name="Land M."/>
            <person name="Hauser L."/>
            <person name="Kyrpides N."/>
            <person name="Mikhailova N."/>
            <person name="Zhao F."/>
            <person name="Li T."/>
            <person name="Liu Z."/>
            <person name="Overmann J."/>
            <person name="Bryant D.A."/>
            <person name="Richardson P."/>
        </authorList>
    </citation>
    <scope>NUCLEOTIDE SEQUENCE [LARGE SCALE GENOMIC DNA]</scope>
    <source>
        <strain>DSM 263 / NCIMB 8327</strain>
    </source>
</reference>
<keyword id="KW-0031">Aminopeptidase</keyword>
<keyword id="KW-0963">Cytoplasm</keyword>
<keyword id="KW-0378">Hydrolase</keyword>
<keyword id="KW-0464">Manganese</keyword>
<keyword id="KW-0479">Metal-binding</keyword>
<keyword id="KW-0645">Protease</keyword>
<accession>B3QNM5</accession>
<feature type="chain" id="PRO_1000098314" description="Probable cytosol aminopeptidase">
    <location>
        <begin position="1"/>
        <end position="503"/>
    </location>
</feature>
<feature type="active site" evidence="1">
    <location>
        <position position="283"/>
    </location>
</feature>
<feature type="active site" evidence="1">
    <location>
        <position position="357"/>
    </location>
</feature>
<feature type="binding site" evidence="1">
    <location>
        <position position="271"/>
    </location>
    <ligand>
        <name>Mn(2+)</name>
        <dbReference type="ChEBI" id="CHEBI:29035"/>
        <label>2</label>
    </ligand>
</feature>
<feature type="binding site" evidence="1">
    <location>
        <position position="276"/>
    </location>
    <ligand>
        <name>Mn(2+)</name>
        <dbReference type="ChEBI" id="CHEBI:29035"/>
        <label>1</label>
    </ligand>
</feature>
<feature type="binding site" evidence="1">
    <location>
        <position position="276"/>
    </location>
    <ligand>
        <name>Mn(2+)</name>
        <dbReference type="ChEBI" id="CHEBI:29035"/>
        <label>2</label>
    </ligand>
</feature>
<feature type="binding site" evidence="1">
    <location>
        <position position="294"/>
    </location>
    <ligand>
        <name>Mn(2+)</name>
        <dbReference type="ChEBI" id="CHEBI:29035"/>
        <label>2</label>
    </ligand>
</feature>
<feature type="binding site" evidence="1">
    <location>
        <position position="353"/>
    </location>
    <ligand>
        <name>Mn(2+)</name>
        <dbReference type="ChEBI" id="CHEBI:29035"/>
        <label>1</label>
    </ligand>
</feature>
<feature type="binding site" evidence="1">
    <location>
        <position position="355"/>
    </location>
    <ligand>
        <name>Mn(2+)</name>
        <dbReference type="ChEBI" id="CHEBI:29035"/>
        <label>1</label>
    </ligand>
</feature>
<feature type="binding site" evidence="1">
    <location>
        <position position="355"/>
    </location>
    <ligand>
        <name>Mn(2+)</name>
        <dbReference type="ChEBI" id="CHEBI:29035"/>
        <label>2</label>
    </ligand>
</feature>
<protein>
    <recommendedName>
        <fullName evidence="1">Probable cytosol aminopeptidase</fullName>
        <ecNumber evidence="1">3.4.11.1</ecNumber>
    </recommendedName>
    <alternativeName>
        <fullName evidence="1">Leucine aminopeptidase</fullName>
        <shortName evidence="1">LAP</shortName>
        <ecNumber evidence="1">3.4.11.10</ecNumber>
    </alternativeName>
    <alternativeName>
        <fullName evidence="1">Leucyl aminopeptidase</fullName>
    </alternativeName>
</protein>
<gene>
    <name evidence="1" type="primary">pepA</name>
    <name type="ordered locus">Cpar_1121</name>
</gene>
<evidence type="ECO:0000255" key="1">
    <source>
        <dbReference type="HAMAP-Rule" id="MF_00181"/>
    </source>
</evidence>
<comment type="function">
    <text evidence="1">Presumably involved in the processing and regular turnover of intracellular proteins. Catalyzes the removal of unsubstituted N-terminal amino acids from various peptides.</text>
</comment>
<comment type="catalytic activity">
    <reaction evidence="1">
        <text>Release of an N-terminal amino acid, Xaa-|-Yaa-, in which Xaa is preferably Leu, but may be other amino acids including Pro although not Arg or Lys, and Yaa may be Pro. Amino acid amides and methyl esters are also readily hydrolyzed, but rates on arylamides are exceedingly low.</text>
        <dbReference type="EC" id="3.4.11.1"/>
    </reaction>
</comment>
<comment type="catalytic activity">
    <reaction evidence="1">
        <text>Release of an N-terminal amino acid, preferentially leucine, but not glutamic or aspartic acids.</text>
        <dbReference type="EC" id="3.4.11.10"/>
    </reaction>
</comment>
<comment type="cofactor">
    <cofactor evidence="1">
        <name>Mn(2+)</name>
        <dbReference type="ChEBI" id="CHEBI:29035"/>
    </cofactor>
    <text evidence="1">Binds 2 manganese ions per subunit.</text>
</comment>
<comment type="subcellular location">
    <subcellularLocation>
        <location evidence="1">Cytoplasm</location>
    </subcellularLocation>
</comment>
<comment type="similarity">
    <text evidence="1">Belongs to the peptidase M17 family.</text>
</comment>
<sequence>MRLTVTAKEGGSIKADALVLFISTKDLKKEAGKLLRSLGADEGALKDFKASAGELVMAYRAASGKSPLRLLLAGIGDGLKLEEFRKAAEAAARKAVDLKIGILALDCSGAAQWAKQLKCKSDELAAVLAGAAQYGAYRFDRLKSGKLDKKKDESKPKGISELVFAGCGTQLGAIENGANAGMIVGSCQNAARDLVNLPGNHLSAEDLADAAREAGKRGGFEVTVFDKKKITELKMGGLLAVNKGSEQPPTFTIMDYKPEGKAKKTIALVGKGVTFDSGGISLKPAQGMEEMKSDMAGAACVIEAVEAAARLALPVRVIGFVPSTDNMPSGSAQMPGDVITTMSGITVEVGNTDAEGRLILADALTYAKQEYNPDVMIDLATLTGACIVALGYPVAGLFSNDEALADRLFKSGQASGEKVWQLPLWDEYAELIKSDVADVHNTGGRGAGSITAAKFLEKFIDGHKHWAHVDIAGPAFPTKGGSKVSGATGFGVRLLVDLLQSWS</sequence>
<dbReference type="EC" id="3.4.11.1" evidence="1"/>
<dbReference type="EC" id="3.4.11.10" evidence="1"/>
<dbReference type="EMBL" id="CP001099">
    <property type="protein sequence ID" value="ACF11528.1"/>
    <property type="molecule type" value="Genomic_DNA"/>
</dbReference>
<dbReference type="RefSeq" id="WP_012502361.1">
    <property type="nucleotide sequence ID" value="NC_011027.1"/>
</dbReference>
<dbReference type="SMR" id="B3QNM5"/>
<dbReference type="STRING" id="517417.Cpar_1121"/>
<dbReference type="KEGG" id="cpc:Cpar_1121"/>
<dbReference type="eggNOG" id="COG0260">
    <property type="taxonomic scope" value="Bacteria"/>
</dbReference>
<dbReference type="HOGENOM" id="CLU_013734_2_2_10"/>
<dbReference type="OrthoDB" id="9809354at2"/>
<dbReference type="Proteomes" id="UP000008811">
    <property type="component" value="Chromosome"/>
</dbReference>
<dbReference type="GO" id="GO:0005737">
    <property type="term" value="C:cytoplasm"/>
    <property type="evidence" value="ECO:0007669"/>
    <property type="project" value="UniProtKB-SubCell"/>
</dbReference>
<dbReference type="GO" id="GO:0030145">
    <property type="term" value="F:manganese ion binding"/>
    <property type="evidence" value="ECO:0007669"/>
    <property type="project" value="UniProtKB-UniRule"/>
</dbReference>
<dbReference type="GO" id="GO:0070006">
    <property type="term" value="F:metalloaminopeptidase activity"/>
    <property type="evidence" value="ECO:0007669"/>
    <property type="project" value="InterPro"/>
</dbReference>
<dbReference type="GO" id="GO:0006508">
    <property type="term" value="P:proteolysis"/>
    <property type="evidence" value="ECO:0007669"/>
    <property type="project" value="UniProtKB-KW"/>
</dbReference>
<dbReference type="CDD" id="cd00433">
    <property type="entry name" value="Peptidase_M17"/>
    <property type="match status" value="1"/>
</dbReference>
<dbReference type="Gene3D" id="3.40.220.10">
    <property type="entry name" value="Leucine Aminopeptidase, subunit E, domain 1"/>
    <property type="match status" value="1"/>
</dbReference>
<dbReference type="Gene3D" id="3.40.630.10">
    <property type="entry name" value="Zn peptidases"/>
    <property type="match status" value="1"/>
</dbReference>
<dbReference type="HAMAP" id="MF_00181">
    <property type="entry name" value="Cytosol_peptidase_M17"/>
    <property type="match status" value="1"/>
</dbReference>
<dbReference type="InterPro" id="IPR011356">
    <property type="entry name" value="Leucine_aapep/pepB"/>
</dbReference>
<dbReference type="InterPro" id="IPR043472">
    <property type="entry name" value="Macro_dom-like"/>
</dbReference>
<dbReference type="InterPro" id="IPR000819">
    <property type="entry name" value="Peptidase_M17_C"/>
</dbReference>
<dbReference type="InterPro" id="IPR023042">
    <property type="entry name" value="Peptidase_M17_leu_NH2_pept"/>
</dbReference>
<dbReference type="InterPro" id="IPR008283">
    <property type="entry name" value="Peptidase_M17_N"/>
</dbReference>
<dbReference type="NCBIfam" id="NF002073">
    <property type="entry name" value="PRK00913.1-2"/>
    <property type="match status" value="1"/>
</dbReference>
<dbReference type="NCBIfam" id="NF002074">
    <property type="entry name" value="PRK00913.1-4"/>
    <property type="match status" value="1"/>
</dbReference>
<dbReference type="NCBIfam" id="NF002082">
    <property type="entry name" value="PRK00913.3-4"/>
    <property type="match status" value="1"/>
</dbReference>
<dbReference type="PANTHER" id="PTHR11963:SF23">
    <property type="entry name" value="CYTOSOL AMINOPEPTIDASE"/>
    <property type="match status" value="1"/>
</dbReference>
<dbReference type="PANTHER" id="PTHR11963">
    <property type="entry name" value="LEUCINE AMINOPEPTIDASE-RELATED"/>
    <property type="match status" value="1"/>
</dbReference>
<dbReference type="Pfam" id="PF00883">
    <property type="entry name" value="Peptidase_M17"/>
    <property type="match status" value="1"/>
</dbReference>
<dbReference type="Pfam" id="PF02789">
    <property type="entry name" value="Peptidase_M17_N"/>
    <property type="match status" value="1"/>
</dbReference>
<dbReference type="PRINTS" id="PR00481">
    <property type="entry name" value="LAMNOPPTDASE"/>
</dbReference>
<dbReference type="SUPFAM" id="SSF52949">
    <property type="entry name" value="Macro domain-like"/>
    <property type="match status" value="1"/>
</dbReference>
<dbReference type="SUPFAM" id="SSF53187">
    <property type="entry name" value="Zn-dependent exopeptidases"/>
    <property type="match status" value="1"/>
</dbReference>
<dbReference type="PROSITE" id="PS00631">
    <property type="entry name" value="CYTOSOL_AP"/>
    <property type="match status" value="1"/>
</dbReference>
<name>AMPA_CHLP8</name>